<sequence length="451" mass="50831">MTTRYRVEYALKSHRRDQLIEWIKGLLAVPFVLHSQPTAVQEEDATKLAAVAHDTHQRYAEIFSDVERLLNDHIDHELSGAAGKSKLKLLVPTVGTFFTRLYLREAFDYQDRQRFISRRRFVAPSFNDVRLILNSAQLLGLVHTKGLELVTFDGDVTLYDDGANLNADSPVIPRIIRLLQQGIKVGIVTAAGYTDEAKYYERLQGLLDVMRDASDLTDEQRSALIVMGGESNYLFRYDASSPHRLTYVPRENWVIGEMATWEEEDITQLLNIAESSLRACVANLNLPVSVLRKDRAVGVFPKNRGRLSREQLEETVLVVQNTVERSQVGSRLPFCAFNGCSPFFVSHYLRHHPPRRKYKPPIQPCMLISITQPGGNDVFVDIGDKSWGVRACQQYFGGIDPSRTLHVGDQFLSAGANDFKARLASTTAWIASPAETVQLLDELDTIQKVLA</sequence>
<organism>
    <name type="scientific">Emericella nidulans (strain FGSC A4 / ATCC 38163 / CBS 112.46 / NRRL 194 / M139)</name>
    <name type="common">Aspergillus nidulans</name>
    <dbReference type="NCBI Taxonomy" id="227321"/>
    <lineage>
        <taxon>Eukaryota</taxon>
        <taxon>Fungi</taxon>
        <taxon>Dikarya</taxon>
        <taxon>Ascomycota</taxon>
        <taxon>Pezizomycotina</taxon>
        <taxon>Eurotiomycetes</taxon>
        <taxon>Eurotiomycetidae</taxon>
        <taxon>Eurotiales</taxon>
        <taxon>Aspergillaceae</taxon>
        <taxon>Aspergillus</taxon>
        <taxon>Aspergillus subgen. Nidulantes</taxon>
    </lineage>
</organism>
<keyword id="KW-0067">ATP-binding</keyword>
<keyword id="KW-0378">Hydrolase</keyword>
<keyword id="KW-0460">Magnesium</keyword>
<keyword id="KW-0479">Metal-binding</keyword>
<keyword id="KW-0546">Nucleotide metabolism</keyword>
<keyword id="KW-0547">Nucleotide-binding</keyword>
<keyword id="KW-1185">Reference proteome</keyword>
<dbReference type="EC" id="3.1.3.99" evidence="2"/>
<dbReference type="EMBL" id="AACD01000054">
    <property type="protein sequence ID" value="EAA63123.1"/>
    <property type="status" value="ALT_SEQ"/>
    <property type="molecule type" value="Genomic_DNA"/>
</dbReference>
<dbReference type="EMBL" id="BN001306">
    <property type="protein sequence ID" value="CBF83155.1"/>
    <property type="status" value="ALT_SEQ"/>
    <property type="molecule type" value="Genomic_DNA"/>
</dbReference>
<dbReference type="RefSeq" id="XP_660826.1">
    <property type="nucleotide sequence ID" value="XM_655734.1"/>
</dbReference>
<dbReference type="SMR" id="Q5B8A8"/>
<dbReference type="FunCoup" id="Q5B8A8">
    <property type="interactions" value="88"/>
</dbReference>
<dbReference type="STRING" id="227321.Q5B8A8"/>
<dbReference type="eggNOG" id="ENOG502QR24">
    <property type="taxonomic scope" value="Eukaryota"/>
</dbReference>
<dbReference type="HOGENOM" id="CLU_031816_1_0_1"/>
<dbReference type="InParanoid" id="Q5B8A8"/>
<dbReference type="Proteomes" id="UP000000560">
    <property type="component" value="Chromosome VI"/>
</dbReference>
<dbReference type="GO" id="GO:0005524">
    <property type="term" value="F:ATP binding"/>
    <property type="evidence" value="ECO:0007669"/>
    <property type="project" value="UniProtKB-KW"/>
</dbReference>
<dbReference type="GO" id="GO:0050483">
    <property type="term" value="F:IMP 5'-nucleotidase activity"/>
    <property type="evidence" value="ECO:0000318"/>
    <property type="project" value="GO_Central"/>
</dbReference>
<dbReference type="GO" id="GO:0000287">
    <property type="term" value="F:magnesium ion binding"/>
    <property type="evidence" value="ECO:0007669"/>
    <property type="project" value="InterPro"/>
</dbReference>
<dbReference type="GO" id="GO:0006190">
    <property type="term" value="P:inosine salvage"/>
    <property type="evidence" value="ECO:0000318"/>
    <property type="project" value="GO_Central"/>
</dbReference>
<dbReference type="GO" id="GO:0071590">
    <property type="term" value="P:nicotinamide riboside biosynthetic process"/>
    <property type="evidence" value="ECO:0000318"/>
    <property type="project" value="GO_Central"/>
</dbReference>
<dbReference type="GO" id="GO:0071592">
    <property type="term" value="P:nicotinic acid riboside biosynthetic process"/>
    <property type="evidence" value="ECO:0000318"/>
    <property type="project" value="GO_Central"/>
</dbReference>
<dbReference type="GO" id="GO:0009117">
    <property type="term" value="P:nucleotide metabolic process"/>
    <property type="evidence" value="ECO:0007669"/>
    <property type="project" value="UniProtKB-KW"/>
</dbReference>
<dbReference type="InterPro" id="IPR036412">
    <property type="entry name" value="HAD-like_sf"/>
</dbReference>
<dbReference type="InterPro" id="IPR009453">
    <property type="entry name" value="ISN1"/>
</dbReference>
<dbReference type="PANTHER" id="PTHR28213">
    <property type="entry name" value="IMP-SPECIFIC 5'-NUCLEOTIDASE 1"/>
    <property type="match status" value="1"/>
</dbReference>
<dbReference type="PANTHER" id="PTHR28213:SF1">
    <property type="entry name" value="IMP-SPECIFIC 5'-NUCLEOTIDASE 1"/>
    <property type="match status" value="1"/>
</dbReference>
<dbReference type="Pfam" id="PF06437">
    <property type="entry name" value="ISN1"/>
    <property type="match status" value="2"/>
</dbReference>
<dbReference type="PIRSF" id="PIRSF028836">
    <property type="entry name" value="ISN1"/>
    <property type="match status" value="1"/>
</dbReference>
<dbReference type="SUPFAM" id="SSF56784">
    <property type="entry name" value="HAD-like"/>
    <property type="match status" value="1"/>
</dbReference>
<proteinExistence type="inferred from homology"/>
<evidence type="ECO:0000250" key="1">
    <source>
        <dbReference type="UniProtKB" id="A0A144A134"/>
    </source>
</evidence>
<evidence type="ECO:0000250" key="2">
    <source>
        <dbReference type="UniProtKB" id="Q99312"/>
    </source>
</evidence>
<evidence type="ECO:0000305" key="3"/>
<protein>
    <recommendedName>
        <fullName>IMP-specific 5'-nucleotidase 1</fullName>
        <ecNumber evidence="2">3.1.3.99</ecNumber>
    </recommendedName>
</protein>
<accession>Q5B8A8</accession>
<accession>C8VI84</accession>
<feature type="chain" id="PRO_0000084251" description="IMP-specific 5'-nucleotidase 1">
    <location>
        <begin position="1"/>
        <end position="451"/>
    </location>
</feature>
<feature type="active site" description="Nucleophile" evidence="1">
    <location>
        <position position="153"/>
    </location>
</feature>
<feature type="active site" description="Proton donor" evidence="1">
    <location>
        <position position="155"/>
    </location>
</feature>
<feature type="binding site" evidence="1">
    <location>
        <position position="153"/>
    </location>
    <ligand>
        <name>IMP</name>
        <dbReference type="ChEBI" id="CHEBI:58053"/>
    </ligand>
</feature>
<feature type="binding site" evidence="1">
    <location>
        <position position="153"/>
    </location>
    <ligand>
        <name>Mg(2+)</name>
        <dbReference type="ChEBI" id="CHEBI:18420"/>
    </ligand>
</feature>
<feature type="binding site" evidence="1">
    <location>
        <position position="155"/>
    </location>
    <ligand>
        <name>IMP</name>
        <dbReference type="ChEBI" id="CHEBI:58053"/>
    </ligand>
</feature>
<feature type="binding site" evidence="1">
    <location>
        <position position="155"/>
    </location>
    <ligand>
        <name>Mg(2+)</name>
        <dbReference type="ChEBI" id="CHEBI:18420"/>
    </ligand>
</feature>
<feature type="binding site" evidence="1">
    <location>
        <position position="161"/>
    </location>
    <ligand>
        <name>IMP</name>
        <dbReference type="ChEBI" id="CHEBI:58053"/>
    </ligand>
</feature>
<feature type="binding site" evidence="1">
    <location>
        <position position="189"/>
    </location>
    <ligand>
        <name>IMP</name>
        <dbReference type="ChEBI" id="CHEBI:58053"/>
    </ligand>
</feature>
<feature type="binding site" evidence="1">
    <location>
        <position position="377"/>
    </location>
    <ligand>
        <name>IMP</name>
        <dbReference type="ChEBI" id="CHEBI:58053"/>
    </ligand>
</feature>
<feature type="binding site" evidence="1">
    <location>
        <position position="385"/>
    </location>
    <ligand>
        <name>IMP</name>
        <dbReference type="ChEBI" id="CHEBI:58053"/>
    </ligand>
</feature>
<feature type="binding site" evidence="1">
    <location>
        <position position="409"/>
    </location>
    <ligand>
        <name>Mg(2+)</name>
        <dbReference type="ChEBI" id="CHEBI:18420"/>
    </ligand>
</feature>
<name>ISN1_EMENI</name>
<comment type="function">
    <text evidence="2">IMP-specific 5'-nucleotidase involved in IMP (inositol monophosphate) degradation.</text>
</comment>
<comment type="catalytic activity">
    <reaction evidence="2">
        <text>IMP + H2O = inosine + phosphate</text>
        <dbReference type="Rhea" id="RHEA:27718"/>
        <dbReference type="ChEBI" id="CHEBI:15377"/>
        <dbReference type="ChEBI" id="CHEBI:17596"/>
        <dbReference type="ChEBI" id="CHEBI:43474"/>
        <dbReference type="ChEBI" id="CHEBI:58053"/>
        <dbReference type="EC" id="3.1.3.99"/>
    </reaction>
</comment>
<comment type="cofactor">
    <cofactor evidence="2">
        <name>Mg(2+)</name>
        <dbReference type="ChEBI" id="CHEBI:18420"/>
    </cofactor>
</comment>
<comment type="activity regulation">
    <text evidence="1 2">Allosterically activated by ATP (By similarity). ATP binding is a prerequisite to magnesium and substrate binding. ATP binds to 2 of the subunits in the homotetramer inducing a closure of these 2 subunits and the release of the C-terminal loop, thereby activating the enzyme (By similarity).</text>
</comment>
<comment type="subunit">
    <text evidence="2">Homotetramer.</text>
</comment>
<comment type="similarity">
    <text evidence="3">Belongs to the ISN1 family.</text>
</comment>
<comment type="sequence caution" evidence="3">
    <conflict type="erroneous gene model prediction">
        <sequence resource="EMBL-CDS" id="CBF83155"/>
    </conflict>
</comment>
<comment type="sequence caution" evidence="3">
    <conflict type="erroneous gene model prediction">
        <sequence resource="EMBL-CDS" id="EAA63123"/>
    </conflict>
</comment>
<gene>
    <name type="primary">isn1</name>
    <name type="ORF">AN3222</name>
</gene>
<reference key="1">
    <citation type="journal article" date="2005" name="Nature">
        <title>Sequencing of Aspergillus nidulans and comparative analysis with A. fumigatus and A. oryzae.</title>
        <authorList>
            <person name="Galagan J.E."/>
            <person name="Calvo S.E."/>
            <person name="Cuomo C."/>
            <person name="Ma L.-J."/>
            <person name="Wortman J.R."/>
            <person name="Batzoglou S."/>
            <person name="Lee S.-I."/>
            <person name="Bastuerkmen M."/>
            <person name="Spevak C.C."/>
            <person name="Clutterbuck J."/>
            <person name="Kapitonov V."/>
            <person name="Jurka J."/>
            <person name="Scazzocchio C."/>
            <person name="Farman M.L."/>
            <person name="Butler J."/>
            <person name="Purcell S."/>
            <person name="Harris S."/>
            <person name="Braus G.H."/>
            <person name="Draht O."/>
            <person name="Busch S."/>
            <person name="D'Enfert C."/>
            <person name="Bouchier C."/>
            <person name="Goldman G.H."/>
            <person name="Bell-Pedersen D."/>
            <person name="Griffiths-Jones S."/>
            <person name="Doonan J.H."/>
            <person name="Yu J."/>
            <person name="Vienken K."/>
            <person name="Pain A."/>
            <person name="Freitag M."/>
            <person name="Selker E.U."/>
            <person name="Archer D.B."/>
            <person name="Penalva M.A."/>
            <person name="Oakley B.R."/>
            <person name="Momany M."/>
            <person name="Tanaka T."/>
            <person name="Kumagai T."/>
            <person name="Asai K."/>
            <person name="Machida M."/>
            <person name="Nierman W.C."/>
            <person name="Denning D.W."/>
            <person name="Caddick M.X."/>
            <person name="Hynes M."/>
            <person name="Paoletti M."/>
            <person name="Fischer R."/>
            <person name="Miller B.L."/>
            <person name="Dyer P.S."/>
            <person name="Sachs M.S."/>
            <person name="Osmani S.A."/>
            <person name="Birren B.W."/>
        </authorList>
    </citation>
    <scope>NUCLEOTIDE SEQUENCE [LARGE SCALE GENOMIC DNA]</scope>
    <source>
        <strain>FGSC A4 / ATCC 38163 / CBS 112.46 / NRRL 194 / M139</strain>
    </source>
</reference>
<reference key="2">
    <citation type="journal article" date="2009" name="Fungal Genet. Biol.">
        <title>The 2008 update of the Aspergillus nidulans genome annotation: a community effort.</title>
        <authorList>
            <person name="Wortman J.R."/>
            <person name="Gilsenan J.M."/>
            <person name="Joardar V."/>
            <person name="Deegan J."/>
            <person name="Clutterbuck J."/>
            <person name="Andersen M.R."/>
            <person name="Archer D."/>
            <person name="Bencina M."/>
            <person name="Braus G."/>
            <person name="Coutinho P."/>
            <person name="von Dohren H."/>
            <person name="Doonan J."/>
            <person name="Driessen A.J."/>
            <person name="Durek P."/>
            <person name="Espeso E."/>
            <person name="Fekete E."/>
            <person name="Flipphi M."/>
            <person name="Estrada C.G."/>
            <person name="Geysens S."/>
            <person name="Goldman G."/>
            <person name="de Groot P.W."/>
            <person name="Hansen K."/>
            <person name="Harris S.D."/>
            <person name="Heinekamp T."/>
            <person name="Helmstaedt K."/>
            <person name="Henrissat B."/>
            <person name="Hofmann G."/>
            <person name="Homan T."/>
            <person name="Horio T."/>
            <person name="Horiuchi H."/>
            <person name="James S."/>
            <person name="Jones M."/>
            <person name="Karaffa L."/>
            <person name="Karanyi Z."/>
            <person name="Kato M."/>
            <person name="Keller N."/>
            <person name="Kelly D.E."/>
            <person name="Kiel J.A."/>
            <person name="Kim J.M."/>
            <person name="van der Klei I.J."/>
            <person name="Klis F.M."/>
            <person name="Kovalchuk A."/>
            <person name="Krasevec N."/>
            <person name="Kubicek C.P."/>
            <person name="Liu B."/>
            <person name="Maccabe A."/>
            <person name="Meyer V."/>
            <person name="Mirabito P."/>
            <person name="Miskei M."/>
            <person name="Mos M."/>
            <person name="Mullins J."/>
            <person name="Nelson D.R."/>
            <person name="Nielsen J."/>
            <person name="Oakley B.R."/>
            <person name="Osmani S.A."/>
            <person name="Pakula T."/>
            <person name="Paszewski A."/>
            <person name="Paulsen I."/>
            <person name="Pilsyk S."/>
            <person name="Pocsi I."/>
            <person name="Punt P.J."/>
            <person name="Ram A.F."/>
            <person name="Ren Q."/>
            <person name="Robellet X."/>
            <person name="Robson G."/>
            <person name="Seiboth B."/>
            <person name="van Solingen P."/>
            <person name="Specht T."/>
            <person name="Sun J."/>
            <person name="Taheri-Talesh N."/>
            <person name="Takeshita N."/>
            <person name="Ussery D."/>
            <person name="vanKuyk P.A."/>
            <person name="Visser H."/>
            <person name="van de Vondervoort P.J."/>
            <person name="de Vries R.P."/>
            <person name="Walton J."/>
            <person name="Xiang X."/>
            <person name="Xiong Y."/>
            <person name="Zeng A.P."/>
            <person name="Brandt B.W."/>
            <person name="Cornell M.J."/>
            <person name="van den Hondel C.A."/>
            <person name="Visser J."/>
            <person name="Oliver S.G."/>
            <person name="Turner G."/>
        </authorList>
    </citation>
    <scope>GENOME REANNOTATION</scope>
    <source>
        <strain>FGSC A4 / ATCC 38163 / CBS 112.46 / NRRL 194 / M139</strain>
    </source>
</reference>